<accession>O24650</accession>
<feature type="initiator methionine" description="Removed" evidence="1">
    <location>
        <position position="1"/>
    </location>
</feature>
<feature type="chain" id="PRO_0000199664" description="Profilin-2">
    <location>
        <begin position="2"/>
        <end position="131"/>
    </location>
</feature>
<feature type="short sequence motif" description="Involved in PIP2 interaction">
    <location>
        <begin position="81"/>
        <end position="97"/>
    </location>
</feature>
<feature type="modified residue" description="Phosphothreonine" evidence="1">
    <location>
        <position position="111"/>
    </location>
</feature>
<feature type="disulfide bond" evidence="3">
    <location>
        <begin position="13"/>
        <end position="115"/>
    </location>
</feature>
<protein>
    <recommendedName>
        <fullName>Profilin-2</fullName>
    </recommendedName>
    <alternativeName>
        <fullName>Allergen Phl p 11</fullName>
    </alternativeName>
    <alternativeName>
        <fullName>Pollen allergen Phl p 12</fullName>
    </alternativeName>
    <alternativeName>
        <fullName>Profilin 4</fullName>
    </alternativeName>
    <allergenName>Phl p 12</allergenName>
</protein>
<dbReference type="EMBL" id="Y09456">
    <property type="protein sequence ID" value="CAA70608.1"/>
    <property type="molecule type" value="mRNA"/>
</dbReference>
<dbReference type="EMBL" id="Y09458">
    <property type="protein sequence ID" value="CAA70610.1"/>
    <property type="molecule type" value="mRNA"/>
</dbReference>
<dbReference type="SMR" id="O24650"/>
<dbReference type="Allergome" id="3490">
    <property type="allergen name" value="Phl p 12.0102"/>
</dbReference>
<dbReference type="Allergome" id="553">
    <property type="allergen name" value="Phl p 12"/>
</dbReference>
<dbReference type="GO" id="GO:0005938">
    <property type="term" value="C:cell cortex"/>
    <property type="evidence" value="ECO:0007669"/>
    <property type="project" value="TreeGrafter"/>
</dbReference>
<dbReference type="GO" id="GO:0005856">
    <property type="term" value="C:cytoskeleton"/>
    <property type="evidence" value="ECO:0007669"/>
    <property type="project" value="UniProtKB-SubCell"/>
</dbReference>
<dbReference type="GO" id="GO:0003785">
    <property type="term" value="F:actin monomer binding"/>
    <property type="evidence" value="ECO:0007669"/>
    <property type="project" value="TreeGrafter"/>
</dbReference>
<dbReference type="CDD" id="cd00148">
    <property type="entry name" value="PROF"/>
    <property type="match status" value="1"/>
</dbReference>
<dbReference type="FunFam" id="3.30.450.30:FF:000001">
    <property type="entry name" value="Profilin"/>
    <property type="match status" value="1"/>
</dbReference>
<dbReference type="Gene3D" id="3.30.450.30">
    <property type="entry name" value="Dynein light chain 2a, cytoplasmic"/>
    <property type="match status" value="1"/>
</dbReference>
<dbReference type="InterPro" id="IPR048278">
    <property type="entry name" value="PFN"/>
</dbReference>
<dbReference type="InterPro" id="IPR005455">
    <property type="entry name" value="PFN_euk"/>
</dbReference>
<dbReference type="InterPro" id="IPR036140">
    <property type="entry name" value="PFN_sf"/>
</dbReference>
<dbReference type="InterPro" id="IPR027310">
    <property type="entry name" value="Profilin_CS"/>
</dbReference>
<dbReference type="PANTHER" id="PTHR11604">
    <property type="entry name" value="PROFILIN"/>
    <property type="match status" value="1"/>
</dbReference>
<dbReference type="PANTHER" id="PTHR11604:SF31">
    <property type="entry name" value="PROFILIN"/>
    <property type="match status" value="1"/>
</dbReference>
<dbReference type="Pfam" id="PF00235">
    <property type="entry name" value="Profilin"/>
    <property type="match status" value="1"/>
</dbReference>
<dbReference type="PRINTS" id="PR00392">
    <property type="entry name" value="PROFILIN"/>
</dbReference>
<dbReference type="PRINTS" id="PR01640">
    <property type="entry name" value="PROFILINPLNT"/>
</dbReference>
<dbReference type="SMART" id="SM00392">
    <property type="entry name" value="PROF"/>
    <property type="match status" value="1"/>
</dbReference>
<dbReference type="SUPFAM" id="SSF55770">
    <property type="entry name" value="Profilin (actin-binding protein)"/>
    <property type="match status" value="1"/>
</dbReference>
<dbReference type="PROSITE" id="PS00414">
    <property type="entry name" value="PROFILIN"/>
    <property type="match status" value="1"/>
</dbReference>
<evidence type="ECO:0000250" key="1"/>
<evidence type="ECO:0000305" key="2"/>
<evidence type="ECO:0000305" key="3">
    <source>
    </source>
</evidence>
<keyword id="KW-0009">Actin-binding</keyword>
<keyword id="KW-0020">Allergen</keyword>
<keyword id="KW-0963">Cytoplasm</keyword>
<keyword id="KW-0206">Cytoskeleton</keyword>
<keyword id="KW-1015">Disulfide bond</keyword>
<keyword id="KW-0597">Phosphoprotein</keyword>
<name>PROF2_PHLPR</name>
<proteinExistence type="evidence at protein level"/>
<reference key="1">
    <citation type="journal article" date="1997" name="Biochim. Biophys. Acta">
        <title>Sequence polymorphism and structural analysis of timothy grass pollen profilin allergen (Phl p 11).</title>
        <authorList>
            <person name="Asturias J.A."/>
            <person name="Arilla M.C."/>
            <person name="Bartolome B."/>
            <person name="Martinez J."/>
            <person name="Martinez A."/>
            <person name="Palacios R."/>
        </authorList>
    </citation>
    <scope>NUCLEOTIDE SEQUENCE [MRNA]</scope>
    <source>
        <tissue>Pollen</tissue>
    </source>
</reference>
<reference key="2">
    <citation type="journal article" date="2013" name="PLoS ONE">
        <title>Analysis of the effects of polymorphism on pollen profilin structural functionality and the generation of conformational, T- and B-cell epitopes.</title>
        <authorList>
            <person name="Jimenez-Lopez J.C."/>
            <person name="Rodriguez-Garcia M.I."/>
            <person name="Alche J.D."/>
        </authorList>
    </citation>
    <scope>3D-STRUCTURE MODELING</scope>
    <scope>DISULFIDE BOND</scope>
</reference>
<comment type="function">
    <text>Binds to actin and affects the structure of the cytoskeleton. At high concentrations, profilin prevents the polymerization of actin, whereas it enhances it at low concentrations. By binding to PIP2, it inhibits the formation of IP3 and DG.</text>
</comment>
<comment type="subunit">
    <text>Occurs in many kinds of cells as a complex with monomeric actin in a 1:1 ratio.</text>
</comment>
<comment type="subcellular location">
    <subcellularLocation>
        <location>Cytoplasm</location>
        <location>Cytoskeleton</location>
    </subcellularLocation>
</comment>
<comment type="PTM">
    <text evidence="1">Phosphorylated by MAP kinases.</text>
</comment>
<comment type="polymorphism">
    <text>Several isoforms of the allergen exist due to polymorphism.</text>
</comment>
<comment type="allergen">
    <text>Causes an allergic reaction in human. Binds to IgE.</text>
</comment>
<comment type="miscellaneous">
    <text evidence="3">The variability of the residues taking part of IgE-binding epitopes might be responsible of the difference in cross-reactivity among olive pollen cultivars, and between distantly related pollen species, leading to a variable range of allergy reactions among atopic patients.</text>
</comment>
<comment type="similarity">
    <text evidence="2">Belongs to the profilin family.</text>
</comment>
<organism>
    <name type="scientific">Phleum pratense</name>
    <name type="common">Common timothy</name>
    <dbReference type="NCBI Taxonomy" id="15957"/>
    <lineage>
        <taxon>Eukaryota</taxon>
        <taxon>Viridiplantae</taxon>
        <taxon>Streptophyta</taxon>
        <taxon>Embryophyta</taxon>
        <taxon>Tracheophyta</taxon>
        <taxon>Spermatophyta</taxon>
        <taxon>Magnoliopsida</taxon>
        <taxon>Liliopsida</taxon>
        <taxon>Poales</taxon>
        <taxon>Poaceae</taxon>
        <taxon>BOP clade</taxon>
        <taxon>Pooideae</taxon>
        <taxon>Poodae</taxon>
        <taxon>Poeae</taxon>
        <taxon>Poeae Chloroplast Group 2 (Poeae type)</taxon>
        <taxon>Poodinae</taxon>
        <taxon>Phleinae</taxon>
        <taxon>Phleum</taxon>
    </lineage>
</organism>
<gene>
    <name type="primary">PRO2</name>
</gene>
<gene>
    <name type="primary">PRO4</name>
</gene>
<sequence length="131" mass="14150">MSWQTYVDEHLMCEIEGHHLASAAILGHDGTVWAQSADFPQFKPEEITGIMKDFDEPGHLAPTGMFVAGAKYMVIQGEPGAVIRGKKGAGGITIKKTGQALVVGIYDEPMTPGQCNMVVERLGDYLVEQGM</sequence>